<dbReference type="EMBL" id="CR848168">
    <property type="protein sequence ID" value="CAJ83419.1"/>
    <property type="molecule type" value="mRNA"/>
</dbReference>
<dbReference type="EMBL" id="BC080968">
    <property type="protein sequence ID" value="AAH80968.1"/>
    <property type="molecule type" value="mRNA"/>
</dbReference>
<dbReference type="RefSeq" id="NP_001008074.1">
    <property type="nucleotide sequence ID" value="NM_001008073.3"/>
</dbReference>
<dbReference type="SMR" id="Q66JC5"/>
<dbReference type="FunCoup" id="Q66JC5">
    <property type="interactions" value="1686"/>
</dbReference>
<dbReference type="STRING" id="8364.ENSXETP00000000222"/>
<dbReference type="PaxDb" id="8364-ENSXETP00000032120"/>
<dbReference type="DNASU" id="493436"/>
<dbReference type="GeneID" id="493436"/>
<dbReference type="KEGG" id="xtr:493436"/>
<dbReference type="AGR" id="Xenbase:XB-GENE-854747"/>
<dbReference type="CTD" id="7178"/>
<dbReference type="Xenbase" id="XB-GENE-854747">
    <property type="gene designation" value="tpt1"/>
</dbReference>
<dbReference type="eggNOG" id="KOG1727">
    <property type="taxonomic scope" value="Eukaryota"/>
</dbReference>
<dbReference type="HOGENOM" id="CLU_095877_0_1_1"/>
<dbReference type="InParanoid" id="Q66JC5"/>
<dbReference type="OMA" id="CAMITEG"/>
<dbReference type="OrthoDB" id="10248936at2759"/>
<dbReference type="PhylomeDB" id="Q66JC5"/>
<dbReference type="TreeFam" id="TF300238"/>
<dbReference type="Proteomes" id="UP000008143">
    <property type="component" value="Chromosome 2"/>
</dbReference>
<dbReference type="GO" id="GO:0005737">
    <property type="term" value="C:cytoplasm"/>
    <property type="evidence" value="ECO:0007669"/>
    <property type="project" value="UniProtKB-SubCell"/>
</dbReference>
<dbReference type="FunFam" id="2.170.150.10:FF:000001">
    <property type="entry name" value="Tumor protein, translationally-controlled 1"/>
    <property type="match status" value="1"/>
</dbReference>
<dbReference type="Gene3D" id="2.170.150.10">
    <property type="entry name" value="Metal Binding Protein, Guanine Nucleotide Exchange Factor, Chain A"/>
    <property type="match status" value="1"/>
</dbReference>
<dbReference type="InterPro" id="IPR011057">
    <property type="entry name" value="Mss4-like_sf"/>
</dbReference>
<dbReference type="InterPro" id="IPR011323">
    <property type="entry name" value="Mss4/transl-control_tumour"/>
</dbReference>
<dbReference type="InterPro" id="IPR034737">
    <property type="entry name" value="TCTP"/>
</dbReference>
<dbReference type="InterPro" id="IPR018103">
    <property type="entry name" value="Translation_control_tumour_CS"/>
</dbReference>
<dbReference type="InterPro" id="IPR018105">
    <property type="entry name" value="Translational_control_tumour_p"/>
</dbReference>
<dbReference type="PANTHER" id="PTHR11991">
    <property type="entry name" value="TRANSLATIONALLY CONTROLLED TUMOR PROTEIN-RELATED"/>
    <property type="match status" value="1"/>
</dbReference>
<dbReference type="PANTHER" id="PTHR11991:SF0">
    <property type="entry name" value="TRANSLATIONALLY-CONTROLLED TUMOR PROTEIN"/>
    <property type="match status" value="1"/>
</dbReference>
<dbReference type="Pfam" id="PF00838">
    <property type="entry name" value="TCTP"/>
    <property type="match status" value="1"/>
</dbReference>
<dbReference type="PRINTS" id="PR01653">
    <property type="entry name" value="TCTPROTEIN"/>
</dbReference>
<dbReference type="SUPFAM" id="SSF51316">
    <property type="entry name" value="Mss4-like"/>
    <property type="match status" value="1"/>
</dbReference>
<dbReference type="PROSITE" id="PS01002">
    <property type="entry name" value="TCTP_1"/>
    <property type="match status" value="1"/>
</dbReference>
<dbReference type="PROSITE" id="PS01003">
    <property type="entry name" value="TCTP_2"/>
    <property type="match status" value="1"/>
</dbReference>
<dbReference type="PROSITE" id="PS51797">
    <property type="entry name" value="TCTP_3"/>
    <property type="match status" value="1"/>
</dbReference>
<gene>
    <name type="primary">tpt1</name>
    <name type="ORF">TGas127d21.1</name>
</gene>
<organism>
    <name type="scientific">Xenopus tropicalis</name>
    <name type="common">Western clawed frog</name>
    <name type="synonym">Silurana tropicalis</name>
    <dbReference type="NCBI Taxonomy" id="8364"/>
    <lineage>
        <taxon>Eukaryota</taxon>
        <taxon>Metazoa</taxon>
        <taxon>Chordata</taxon>
        <taxon>Craniata</taxon>
        <taxon>Vertebrata</taxon>
        <taxon>Euteleostomi</taxon>
        <taxon>Amphibia</taxon>
        <taxon>Batrachia</taxon>
        <taxon>Anura</taxon>
        <taxon>Pipoidea</taxon>
        <taxon>Pipidae</taxon>
        <taxon>Xenopodinae</taxon>
        <taxon>Xenopus</taxon>
        <taxon>Silurana</taxon>
    </lineage>
</organism>
<sequence length="172" mass="19438">MIIYKDTVTEDEMFSDIYKIAETPDGMCFEVEGKIIQRVEGAIDDALIGGNASAECQEEDIGGATTVSGVDIVINHKLQETGFTKDSYKNYIKDYVKLVKAKLEETDPDRVKPFMKGIQDRVKLILGNFKNYQFYTGERMNPDGMVALLDYREDGVTPFMIFFKDGLISEKC</sequence>
<proteinExistence type="evidence at transcript level"/>
<protein>
    <recommendedName>
        <fullName>Translationally-controlled tumor protein homolog</fullName>
        <shortName>TCTP</shortName>
    </recommendedName>
</protein>
<feature type="chain" id="PRO_0000211278" description="Translationally-controlled tumor protein homolog">
    <location>
        <begin position="1"/>
        <end position="172"/>
    </location>
</feature>
<feature type="domain" description="TCTP" evidence="2">
    <location>
        <begin position="1"/>
        <end position="172"/>
    </location>
</feature>
<comment type="function">
    <text evidence="1">Involved in calcium binding and microtubule stabilization.</text>
</comment>
<comment type="subcellular location">
    <subcellularLocation>
        <location evidence="1">Cytoplasm</location>
    </subcellularLocation>
</comment>
<comment type="similarity">
    <text evidence="2">Belongs to the TCTP family.</text>
</comment>
<accession>Q66JC5</accession>
<accession>Q28EM6</accession>
<name>TCTP_XENTR</name>
<keyword id="KW-0106">Calcium</keyword>
<keyword id="KW-0963">Cytoplasm</keyword>
<keyword id="KW-1185">Reference proteome</keyword>
<reference key="1">
    <citation type="submission" date="2006-03" db="EMBL/GenBank/DDBJ databases">
        <authorList>
            <consortium name="Sanger Xenopus tropicalis EST/cDNA project"/>
        </authorList>
    </citation>
    <scope>NUCLEOTIDE SEQUENCE [LARGE SCALE MRNA]</scope>
    <source>
        <tissue>Gastrula</tissue>
    </source>
</reference>
<reference key="2">
    <citation type="submission" date="2004-08" db="EMBL/GenBank/DDBJ databases">
        <authorList>
            <consortium name="NIH - Xenopus Gene Collection (XGC) project"/>
        </authorList>
    </citation>
    <scope>NUCLEOTIDE SEQUENCE [LARGE SCALE MRNA]</scope>
    <source>
        <tissue>Embryo</tissue>
    </source>
</reference>
<evidence type="ECO:0000250" key="1"/>
<evidence type="ECO:0000255" key="2">
    <source>
        <dbReference type="PROSITE-ProRule" id="PRU01133"/>
    </source>
</evidence>